<name>MURG_YERPY</name>
<evidence type="ECO:0000255" key="1">
    <source>
        <dbReference type="HAMAP-Rule" id="MF_00033"/>
    </source>
</evidence>
<comment type="function">
    <text evidence="1">Cell wall formation. Catalyzes the transfer of a GlcNAc subunit on undecaprenyl-pyrophosphoryl-MurNAc-pentapeptide (lipid intermediate I) to form undecaprenyl-pyrophosphoryl-MurNAc-(pentapeptide)GlcNAc (lipid intermediate II).</text>
</comment>
<comment type="catalytic activity">
    <reaction evidence="1">
        <text>di-trans,octa-cis-undecaprenyl diphospho-N-acetyl-alpha-D-muramoyl-L-alanyl-D-glutamyl-meso-2,6-diaminopimeloyl-D-alanyl-D-alanine + UDP-N-acetyl-alpha-D-glucosamine = di-trans,octa-cis-undecaprenyl diphospho-[N-acetyl-alpha-D-glucosaminyl-(1-&gt;4)]-N-acetyl-alpha-D-muramoyl-L-alanyl-D-glutamyl-meso-2,6-diaminopimeloyl-D-alanyl-D-alanine + UDP + H(+)</text>
        <dbReference type="Rhea" id="RHEA:31227"/>
        <dbReference type="ChEBI" id="CHEBI:15378"/>
        <dbReference type="ChEBI" id="CHEBI:57705"/>
        <dbReference type="ChEBI" id="CHEBI:58223"/>
        <dbReference type="ChEBI" id="CHEBI:61387"/>
        <dbReference type="ChEBI" id="CHEBI:61388"/>
        <dbReference type="EC" id="2.4.1.227"/>
    </reaction>
</comment>
<comment type="pathway">
    <text evidence="1">Cell wall biogenesis; peptidoglycan biosynthesis.</text>
</comment>
<comment type="subcellular location">
    <subcellularLocation>
        <location evidence="1">Cell inner membrane</location>
        <topology evidence="1">Peripheral membrane protein</topology>
        <orientation evidence="1">Cytoplasmic side</orientation>
    </subcellularLocation>
</comment>
<comment type="similarity">
    <text evidence="1">Belongs to the glycosyltransferase 28 family. MurG subfamily.</text>
</comment>
<sequence length="356" mass="37760">MSGKTKRLMVMAGGTGGHVFPGLAVAHHLMAQGWQVRWLGTADRMEASLVPQHGIEIDFIKISGLRGKGLMAQLTAPIRIYRAVRQAQKIMRDYQPDVVLGMGGYVSGPGGLAAWLCGVPVVLHEQNGIAGLTNRWLARIAKKVLQAFPGAFPNADVVGNPVRTDVLALPLPAVRLSGREGPIRVLVIGGSQGARILNQTLPLVAASLGEQITLWHQVGKGALPEVSQAYQQAGQAGHQVVEFIDDMAAAYAWADVVVCRSGALTVSEVAAAGLPAIFVPFQHKDRQQYWNALPLEKAGAAKIIEQPQFTATSVSSLLAGWDRATLLSMAERARSVAIPDATERVAAEVVAASKSA</sequence>
<organism>
    <name type="scientific">Yersinia pseudotuberculosis serotype O:3 (strain YPIII)</name>
    <dbReference type="NCBI Taxonomy" id="502800"/>
    <lineage>
        <taxon>Bacteria</taxon>
        <taxon>Pseudomonadati</taxon>
        <taxon>Pseudomonadota</taxon>
        <taxon>Gammaproteobacteria</taxon>
        <taxon>Enterobacterales</taxon>
        <taxon>Yersiniaceae</taxon>
        <taxon>Yersinia</taxon>
    </lineage>
</organism>
<keyword id="KW-0131">Cell cycle</keyword>
<keyword id="KW-0132">Cell division</keyword>
<keyword id="KW-0997">Cell inner membrane</keyword>
<keyword id="KW-1003">Cell membrane</keyword>
<keyword id="KW-0133">Cell shape</keyword>
<keyword id="KW-0961">Cell wall biogenesis/degradation</keyword>
<keyword id="KW-0328">Glycosyltransferase</keyword>
<keyword id="KW-0472">Membrane</keyword>
<keyword id="KW-0573">Peptidoglycan synthesis</keyword>
<keyword id="KW-0808">Transferase</keyword>
<gene>
    <name evidence="1" type="primary">murG</name>
    <name type="ordered locus">YPK_3518</name>
</gene>
<protein>
    <recommendedName>
        <fullName evidence="1">UDP-N-acetylglucosamine--N-acetylmuramyl-(pentapeptide) pyrophosphoryl-undecaprenol N-acetylglucosamine transferase</fullName>
        <ecNumber evidence="1">2.4.1.227</ecNumber>
    </recommendedName>
    <alternativeName>
        <fullName evidence="1">Undecaprenyl-PP-MurNAc-pentapeptide-UDPGlcNAc GlcNAc transferase</fullName>
    </alternativeName>
</protein>
<accession>B1JK81</accession>
<reference key="1">
    <citation type="submission" date="2008-02" db="EMBL/GenBank/DDBJ databases">
        <title>Complete sequence of Yersinia pseudotuberculosis YPIII.</title>
        <authorList>
            <consortium name="US DOE Joint Genome Institute"/>
            <person name="Copeland A."/>
            <person name="Lucas S."/>
            <person name="Lapidus A."/>
            <person name="Glavina del Rio T."/>
            <person name="Dalin E."/>
            <person name="Tice H."/>
            <person name="Bruce D."/>
            <person name="Goodwin L."/>
            <person name="Pitluck S."/>
            <person name="Munk A.C."/>
            <person name="Brettin T."/>
            <person name="Detter J.C."/>
            <person name="Han C."/>
            <person name="Tapia R."/>
            <person name="Schmutz J."/>
            <person name="Larimer F."/>
            <person name="Land M."/>
            <person name="Hauser L."/>
            <person name="Challacombe J.F."/>
            <person name="Green L."/>
            <person name="Lindler L.E."/>
            <person name="Nikolich M.P."/>
            <person name="Richardson P."/>
        </authorList>
    </citation>
    <scope>NUCLEOTIDE SEQUENCE [LARGE SCALE GENOMIC DNA]</scope>
    <source>
        <strain>YPIII</strain>
    </source>
</reference>
<proteinExistence type="inferred from homology"/>
<dbReference type="EC" id="2.4.1.227" evidence="1"/>
<dbReference type="EMBL" id="CP000950">
    <property type="protein sequence ID" value="ACA69785.1"/>
    <property type="molecule type" value="Genomic_DNA"/>
</dbReference>
<dbReference type="RefSeq" id="WP_011191735.1">
    <property type="nucleotide sequence ID" value="NZ_CP009792.1"/>
</dbReference>
<dbReference type="SMR" id="B1JK81"/>
<dbReference type="CAZy" id="GT28">
    <property type="family name" value="Glycosyltransferase Family 28"/>
</dbReference>
<dbReference type="GeneID" id="49787307"/>
<dbReference type="KEGG" id="ypy:YPK_3518"/>
<dbReference type="PATRIC" id="fig|502800.11.peg.4261"/>
<dbReference type="UniPathway" id="UPA00219"/>
<dbReference type="GO" id="GO:0005886">
    <property type="term" value="C:plasma membrane"/>
    <property type="evidence" value="ECO:0007669"/>
    <property type="project" value="UniProtKB-SubCell"/>
</dbReference>
<dbReference type="GO" id="GO:0051991">
    <property type="term" value="F:UDP-N-acetyl-D-glucosamine:N-acetylmuramoyl-L-alanyl-D-glutamyl-meso-2,6-diaminopimelyl-D-alanyl-D-alanine-diphosphoundecaprenol 4-beta-N-acetylglucosaminlytransferase activity"/>
    <property type="evidence" value="ECO:0007669"/>
    <property type="project" value="RHEA"/>
</dbReference>
<dbReference type="GO" id="GO:0050511">
    <property type="term" value="F:undecaprenyldiphospho-muramoylpentapeptide beta-N-acetylglucosaminyltransferase activity"/>
    <property type="evidence" value="ECO:0007669"/>
    <property type="project" value="UniProtKB-UniRule"/>
</dbReference>
<dbReference type="GO" id="GO:0005975">
    <property type="term" value="P:carbohydrate metabolic process"/>
    <property type="evidence" value="ECO:0007669"/>
    <property type="project" value="InterPro"/>
</dbReference>
<dbReference type="GO" id="GO:0051301">
    <property type="term" value="P:cell division"/>
    <property type="evidence" value="ECO:0007669"/>
    <property type="project" value="UniProtKB-KW"/>
</dbReference>
<dbReference type="GO" id="GO:0071555">
    <property type="term" value="P:cell wall organization"/>
    <property type="evidence" value="ECO:0007669"/>
    <property type="project" value="UniProtKB-KW"/>
</dbReference>
<dbReference type="GO" id="GO:0030259">
    <property type="term" value="P:lipid glycosylation"/>
    <property type="evidence" value="ECO:0007669"/>
    <property type="project" value="UniProtKB-UniRule"/>
</dbReference>
<dbReference type="GO" id="GO:0009252">
    <property type="term" value="P:peptidoglycan biosynthetic process"/>
    <property type="evidence" value="ECO:0007669"/>
    <property type="project" value="UniProtKB-UniRule"/>
</dbReference>
<dbReference type="GO" id="GO:0008360">
    <property type="term" value="P:regulation of cell shape"/>
    <property type="evidence" value="ECO:0007669"/>
    <property type="project" value="UniProtKB-KW"/>
</dbReference>
<dbReference type="CDD" id="cd03785">
    <property type="entry name" value="GT28_MurG"/>
    <property type="match status" value="1"/>
</dbReference>
<dbReference type="FunFam" id="3.40.50.2000:FF:000016">
    <property type="entry name" value="UDP-N-acetylglucosamine--N-acetylmuramyl-(pentapeptide) pyrophosphoryl-undecaprenol N-acetylglucosamine transferase"/>
    <property type="match status" value="1"/>
</dbReference>
<dbReference type="FunFam" id="3.40.50.2000:FF:000018">
    <property type="entry name" value="UDP-N-acetylglucosamine--N-acetylmuramyl-(pentapeptide) pyrophosphoryl-undecaprenol N-acetylglucosamine transferase"/>
    <property type="match status" value="1"/>
</dbReference>
<dbReference type="Gene3D" id="3.40.50.2000">
    <property type="entry name" value="Glycogen Phosphorylase B"/>
    <property type="match status" value="2"/>
</dbReference>
<dbReference type="HAMAP" id="MF_00033">
    <property type="entry name" value="MurG"/>
    <property type="match status" value="1"/>
</dbReference>
<dbReference type="InterPro" id="IPR006009">
    <property type="entry name" value="GlcNAc_MurG"/>
</dbReference>
<dbReference type="InterPro" id="IPR007235">
    <property type="entry name" value="Glyco_trans_28_C"/>
</dbReference>
<dbReference type="InterPro" id="IPR004276">
    <property type="entry name" value="GlycoTrans_28_N"/>
</dbReference>
<dbReference type="NCBIfam" id="TIGR01133">
    <property type="entry name" value="murG"/>
    <property type="match status" value="1"/>
</dbReference>
<dbReference type="PANTHER" id="PTHR21015:SF22">
    <property type="entry name" value="GLYCOSYLTRANSFERASE"/>
    <property type="match status" value="1"/>
</dbReference>
<dbReference type="PANTHER" id="PTHR21015">
    <property type="entry name" value="UDP-N-ACETYLGLUCOSAMINE--N-ACETYLMURAMYL-(PENTAPEPTIDE) PYROPHOSPHORYL-UNDECAPRENOL N-ACETYLGLUCOSAMINE TRANSFERASE 1"/>
    <property type="match status" value="1"/>
</dbReference>
<dbReference type="Pfam" id="PF04101">
    <property type="entry name" value="Glyco_tran_28_C"/>
    <property type="match status" value="1"/>
</dbReference>
<dbReference type="Pfam" id="PF03033">
    <property type="entry name" value="Glyco_transf_28"/>
    <property type="match status" value="1"/>
</dbReference>
<dbReference type="SUPFAM" id="SSF53756">
    <property type="entry name" value="UDP-Glycosyltransferase/glycogen phosphorylase"/>
    <property type="match status" value="1"/>
</dbReference>
<feature type="chain" id="PRO_1000090493" description="UDP-N-acetylglucosamine--N-acetylmuramyl-(pentapeptide) pyrophosphoryl-undecaprenol N-acetylglucosamine transferase">
    <location>
        <begin position="1"/>
        <end position="356"/>
    </location>
</feature>
<feature type="binding site" evidence="1">
    <location>
        <begin position="15"/>
        <end position="17"/>
    </location>
    <ligand>
        <name>UDP-N-acetyl-alpha-D-glucosamine</name>
        <dbReference type="ChEBI" id="CHEBI:57705"/>
    </ligand>
</feature>
<feature type="binding site" evidence="1">
    <location>
        <position position="127"/>
    </location>
    <ligand>
        <name>UDP-N-acetyl-alpha-D-glucosamine</name>
        <dbReference type="ChEBI" id="CHEBI:57705"/>
    </ligand>
</feature>
<feature type="binding site" evidence="1">
    <location>
        <position position="163"/>
    </location>
    <ligand>
        <name>UDP-N-acetyl-alpha-D-glucosamine</name>
        <dbReference type="ChEBI" id="CHEBI:57705"/>
    </ligand>
</feature>
<feature type="binding site" evidence="1">
    <location>
        <position position="191"/>
    </location>
    <ligand>
        <name>UDP-N-acetyl-alpha-D-glucosamine</name>
        <dbReference type="ChEBI" id="CHEBI:57705"/>
    </ligand>
</feature>
<feature type="binding site" evidence="1">
    <location>
        <position position="244"/>
    </location>
    <ligand>
        <name>UDP-N-acetyl-alpha-D-glucosamine</name>
        <dbReference type="ChEBI" id="CHEBI:57705"/>
    </ligand>
</feature>
<feature type="binding site" evidence="1">
    <location>
        <begin position="263"/>
        <end position="268"/>
    </location>
    <ligand>
        <name>UDP-N-acetyl-alpha-D-glucosamine</name>
        <dbReference type="ChEBI" id="CHEBI:57705"/>
    </ligand>
</feature>
<feature type="binding site" evidence="1">
    <location>
        <position position="288"/>
    </location>
    <ligand>
        <name>UDP-N-acetyl-alpha-D-glucosamine</name>
        <dbReference type="ChEBI" id="CHEBI:57705"/>
    </ligand>
</feature>